<sequence length="228" mass="24533">MPAENIVEVHHLKKSVGQGEHELSILTGVELVVKRGETIALVGESGSGKSTLLAILAGLDDGSSGEVSLVGQPLHNMDEEARAKLRAKHVGFVFQSFMLIPTLNALENVELPALLRGESSAESRNGAKALLEQLGLGKRLDHLPAQLSGGEQQRVALARAFNGRPDVLFADEPTGNLDRQTGDKIADLLFSLNREHGTTLIMVTHDLQLAARCDRCLRLVNGQLQEEA</sequence>
<accession>P0A9T8</accession>
<accession>P31219</accession>
<accession>P77322</accession>
<accession>Q2MBT2</accession>
<dbReference type="EMBL" id="U82664">
    <property type="protein sequence ID" value="AAB40249.1"/>
    <property type="molecule type" value="Genomic_DNA"/>
</dbReference>
<dbReference type="EMBL" id="U00096">
    <property type="protein sequence ID" value="AAC73597.1"/>
    <property type="molecule type" value="Genomic_DNA"/>
</dbReference>
<dbReference type="EMBL" id="AP009048">
    <property type="protein sequence ID" value="BAE76274.1"/>
    <property type="molecule type" value="Genomic_DNA"/>
</dbReference>
<dbReference type="EMBL" id="L06182">
    <property type="status" value="NOT_ANNOTATED_CDS"/>
    <property type="molecule type" value="Genomic_DNA"/>
</dbReference>
<dbReference type="PIR" id="F64780">
    <property type="entry name" value="F64780"/>
</dbReference>
<dbReference type="RefSeq" id="NP_415028.1">
    <property type="nucleotide sequence ID" value="NC_000913.3"/>
</dbReference>
<dbReference type="RefSeq" id="WP_001110573.1">
    <property type="nucleotide sequence ID" value="NZ_STEB01000007.1"/>
</dbReference>
<dbReference type="SMR" id="P0A9T8"/>
<dbReference type="BioGRID" id="4259855">
    <property type="interactions" value="9"/>
</dbReference>
<dbReference type="BioGRID" id="849511">
    <property type="interactions" value="1"/>
</dbReference>
<dbReference type="FunCoup" id="P0A9T8">
    <property type="interactions" value="200"/>
</dbReference>
<dbReference type="IntAct" id="P0A9T8">
    <property type="interactions" value="2"/>
</dbReference>
<dbReference type="STRING" id="511145.b0495"/>
<dbReference type="TCDB" id="3.A.1.122.15">
    <property type="family name" value="the atp-binding cassette (abc) superfamily"/>
</dbReference>
<dbReference type="jPOST" id="P0A9T8"/>
<dbReference type="PaxDb" id="511145-b0495"/>
<dbReference type="EnsemblBacteria" id="AAC73597">
    <property type="protein sequence ID" value="AAC73597"/>
    <property type="gene ID" value="b0495"/>
</dbReference>
<dbReference type="GeneID" id="93776954"/>
<dbReference type="GeneID" id="945122"/>
<dbReference type="KEGG" id="ecj:JW0484"/>
<dbReference type="KEGG" id="eco:b0495"/>
<dbReference type="KEGG" id="ecoc:C3026_02435"/>
<dbReference type="PATRIC" id="fig|1411691.4.peg.1781"/>
<dbReference type="EchoBASE" id="EB1609"/>
<dbReference type="eggNOG" id="COG4181">
    <property type="taxonomic scope" value="Bacteria"/>
</dbReference>
<dbReference type="HOGENOM" id="CLU_000604_1_22_6"/>
<dbReference type="InParanoid" id="P0A9T8"/>
<dbReference type="OMA" id="HPRDQFV"/>
<dbReference type="OrthoDB" id="9801477at2"/>
<dbReference type="PhylomeDB" id="P0A9T8"/>
<dbReference type="BioCyc" id="EcoCyc:YBBA-MONOMER"/>
<dbReference type="PRO" id="PR:P0A9T8"/>
<dbReference type="Proteomes" id="UP000000625">
    <property type="component" value="Chromosome"/>
</dbReference>
<dbReference type="GO" id="GO:0005524">
    <property type="term" value="F:ATP binding"/>
    <property type="evidence" value="ECO:0000255"/>
    <property type="project" value="EcoCyc"/>
</dbReference>
<dbReference type="GO" id="GO:0016887">
    <property type="term" value="F:ATP hydrolysis activity"/>
    <property type="evidence" value="ECO:0007669"/>
    <property type="project" value="InterPro"/>
</dbReference>
<dbReference type="CDD" id="cd03255">
    <property type="entry name" value="ABC_MJ0796_LolCDE_FtsE"/>
    <property type="match status" value="1"/>
</dbReference>
<dbReference type="FunFam" id="3.40.50.300:FF:000423">
    <property type="entry name" value="ABC transporter ATP-binding protein YbbA"/>
    <property type="match status" value="1"/>
</dbReference>
<dbReference type="Gene3D" id="3.40.50.300">
    <property type="entry name" value="P-loop containing nucleotide triphosphate hydrolases"/>
    <property type="match status" value="1"/>
</dbReference>
<dbReference type="InterPro" id="IPR003593">
    <property type="entry name" value="AAA+_ATPase"/>
</dbReference>
<dbReference type="InterPro" id="IPR003439">
    <property type="entry name" value="ABC_transporter-like_ATP-bd"/>
</dbReference>
<dbReference type="InterPro" id="IPR017871">
    <property type="entry name" value="ABC_transporter-like_CS"/>
</dbReference>
<dbReference type="InterPro" id="IPR017911">
    <property type="entry name" value="MacB-like_ATP-bd"/>
</dbReference>
<dbReference type="InterPro" id="IPR027417">
    <property type="entry name" value="P-loop_NTPase"/>
</dbReference>
<dbReference type="NCBIfam" id="NF007879">
    <property type="entry name" value="PRK10584.1"/>
    <property type="match status" value="1"/>
</dbReference>
<dbReference type="PANTHER" id="PTHR42798:SF2">
    <property type="entry name" value="ABC TRANSPORTER ATP-BINDING PROTEIN MG467-RELATED"/>
    <property type="match status" value="1"/>
</dbReference>
<dbReference type="PANTHER" id="PTHR42798">
    <property type="entry name" value="LIPOPROTEIN-RELEASING SYSTEM ATP-BINDING PROTEIN LOLD"/>
    <property type="match status" value="1"/>
</dbReference>
<dbReference type="Pfam" id="PF00005">
    <property type="entry name" value="ABC_tran"/>
    <property type="match status" value="1"/>
</dbReference>
<dbReference type="SMART" id="SM00382">
    <property type="entry name" value="AAA"/>
    <property type="match status" value="1"/>
</dbReference>
<dbReference type="SUPFAM" id="SSF52540">
    <property type="entry name" value="P-loop containing nucleoside triphosphate hydrolases"/>
    <property type="match status" value="1"/>
</dbReference>
<dbReference type="PROSITE" id="PS00211">
    <property type="entry name" value="ABC_TRANSPORTER_1"/>
    <property type="match status" value="1"/>
</dbReference>
<dbReference type="PROSITE" id="PS50893">
    <property type="entry name" value="ABC_TRANSPORTER_2"/>
    <property type="match status" value="1"/>
</dbReference>
<name>YBBA_ECOLI</name>
<protein>
    <recommendedName>
        <fullName>Uncharacterized ABC transporter ATP-binding protein YbbA</fullName>
    </recommendedName>
</protein>
<gene>
    <name type="primary">ybbA</name>
    <name type="ordered locus">b0495</name>
    <name type="ordered locus">JW0484</name>
</gene>
<proteinExistence type="inferred from homology"/>
<keyword id="KW-0067">ATP-binding</keyword>
<keyword id="KW-0547">Nucleotide-binding</keyword>
<keyword id="KW-1185">Reference proteome</keyword>
<keyword id="KW-0813">Transport</keyword>
<reference key="1">
    <citation type="submission" date="1997-01" db="EMBL/GenBank/DDBJ databases">
        <title>Sequence of minutes 4-25 of Escherichia coli.</title>
        <authorList>
            <person name="Chung E."/>
            <person name="Allen E."/>
            <person name="Araujo R."/>
            <person name="Aparicio A.M."/>
            <person name="Davis K."/>
            <person name="Duncan M."/>
            <person name="Federspiel N."/>
            <person name="Hyman R."/>
            <person name="Kalman S."/>
            <person name="Komp C."/>
            <person name="Kurdi O."/>
            <person name="Lew H."/>
            <person name="Lin D."/>
            <person name="Namath A."/>
            <person name="Oefner P."/>
            <person name="Roberts D."/>
            <person name="Schramm S."/>
            <person name="Davis R.W."/>
        </authorList>
    </citation>
    <scope>NUCLEOTIDE SEQUENCE [LARGE SCALE GENOMIC DNA]</scope>
    <source>
        <strain>K12 / MG1655 / ATCC 47076</strain>
    </source>
</reference>
<reference key="2">
    <citation type="journal article" date="1997" name="Science">
        <title>The complete genome sequence of Escherichia coli K-12.</title>
        <authorList>
            <person name="Blattner F.R."/>
            <person name="Plunkett G. III"/>
            <person name="Bloch C.A."/>
            <person name="Perna N.T."/>
            <person name="Burland V."/>
            <person name="Riley M."/>
            <person name="Collado-Vides J."/>
            <person name="Glasner J.D."/>
            <person name="Rode C.K."/>
            <person name="Mayhew G.F."/>
            <person name="Gregor J."/>
            <person name="Davis N.W."/>
            <person name="Kirkpatrick H.A."/>
            <person name="Goeden M.A."/>
            <person name="Rose D.J."/>
            <person name="Mau B."/>
            <person name="Shao Y."/>
        </authorList>
    </citation>
    <scope>NUCLEOTIDE SEQUENCE [LARGE SCALE GENOMIC DNA]</scope>
    <source>
        <strain>K12 / MG1655 / ATCC 47076</strain>
    </source>
</reference>
<reference key="3">
    <citation type="journal article" date="2006" name="Mol. Syst. Biol.">
        <title>Highly accurate genome sequences of Escherichia coli K-12 strains MG1655 and W3110.</title>
        <authorList>
            <person name="Hayashi K."/>
            <person name="Morooka N."/>
            <person name="Yamamoto Y."/>
            <person name="Fujita K."/>
            <person name="Isono K."/>
            <person name="Choi S."/>
            <person name="Ohtsubo E."/>
            <person name="Baba T."/>
            <person name="Wanner B.L."/>
            <person name="Mori H."/>
            <person name="Horiuchi T."/>
        </authorList>
    </citation>
    <scope>NUCLEOTIDE SEQUENCE [LARGE SCALE GENOMIC DNA]</scope>
    <source>
        <strain>K12 / W3110 / ATCC 27325 / DSM 5911</strain>
    </source>
</reference>
<reference key="4">
    <citation type="journal article" date="1993" name="J. Biol. Chem.">
        <title>Escherichia coli thioesterase I, molecular cloning and sequencing of the structural gene and identification as a periplasmic enzyme.</title>
        <authorList>
            <person name="Cho H."/>
            <person name="Cronan J.E. Jr."/>
        </authorList>
    </citation>
    <scope>NUCLEOTIDE SEQUENCE [GENOMIC DNA] OF 1-163</scope>
    <source>
        <strain>K12 / W3110 / ATCC 27325 / DSM 5911</strain>
    </source>
</reference>
<evidence type="ECO:0000255" key="1">
    <source>
        <dbReference type="PROSITE-ProRule" id="PRU00434"/>
    </source>
</evidence>
<evidence type="ECO:0000305" key="2"/>
<feature type="chain" id="PRO_0000093152" description="Uncharacterized ABC transporter ATP-binding protein YbbA">
    <location>
        <begin position="1"/>
        <end position="228"/>
    </location>
</feature>
<feature type="domain" description="ABC transporter" evidence="1">
    <location>
        <begin position="7"/>
        <end position="228"/>
    </location>
</feature>
<feature type="binding site" evidence="1">
    <location>
        <begin position="43"/>
        <end position="50"/>
    </location>
    <ligand>
        <name>ATP</name>
        <dbReference type="ChEBI" id="CHEBI:30616"/>
    </ligand>
</feature>
<feature type="sequence conflict" description="In Ref. 4; L06182." evidence="2" ref="4">
    <original>KH</original>
    <variation>ND</variation>
    <location>
        <begin position="88"/>
        <end position="89"/>
    </location>
</feature>
<comment type="similarity">
    <text evidence="2">Belongs to the ABC transporter superfamily.</text>
</comment>
<organism>
    <name type="scientific">Escherichia coli (strain K12)</name>
    <dbReference type="NCBI Taxonomy" id="83333"/>
    <lineage>
        <taxon>Bacteria</taxon>
        <taxon>Pseudomonadati</taxon>
        <taxon>Pseudomonadota</taxon>
        <taxon>Gammaproteobacteria</taxon>
        <taxon>Enterobacterales</taxon>
        <taxon>Enterobacteriaceae</taxon>
        <taxon>Escherichia</taxon>
    </lineage>
</organism>